<keyword id="KW-0010">Activator</keyword>
<keyword id="KW-0235">DNA replication</keyword>
<keyword id="KW-0238">DNA-binding</keyword>
<keyword id="KW-0244">Early protein</keyword>
<keyword id="KW-1048">Host nucleus</keyword>
<keyword id="KW-1017">Isopeptide bond</keyword>
<keyword id="KW-0597">Phosphoprotein</keyword>
<keyword id="KW-1185">Reference proteome</keyword>
<keyword id="KW-0678">Repressor</keyword>
<keyword id="KW-0804">Transcription</keyword>
<keyword id="KW-0805">Transcription regulation</keyword>
<keyword id="KW-0832">Ubl conjugation</keyword>
<proteinExistence type="inferred from homology"/>
<name>VE2_HPV04</name>
<sequence length="402" mass="45752">MESLVARFDALQEAILTHIESQESTLESQIQYWENIRKENAIMHYARKQGLTKLGLQPLPTLAVTEYNAKQAIQIHLTLQSLLKSPFASERWTLTDVSAELINTSPQNCLKKGGYDVAVWFDNDRQNAMLYTNWDFLYYQDMNEQWHKVKGEVDYDGLYFTDHTGERAYFTLFSSDAQRFSRTGLWTVHFKTQVISSPIVSSTYSSSFDTEEQQLPGPSTSYSEVTEQASPTRRRKPRKSDATSTTSPETEGVRLRRRRREGKSGPGSGETPRKRRRGGGRGGGETELGSAPSPAEVGSRHRQVERQGLSRLGLLQAEARDPPMILLKGTANSLKCWRYRKVNSNCCNFLFMSTVWNWVGDCSHNHSRMLIAFDSTDQRDAFVKHNLFPKLCTYTYGSLNSL</sequence>
<comment type="function">
    <text evidence="1">Plays a role in the initiation of viral DNA replication. A dimer of E2 interacts with a dimer of E1 in order to improve specificity of E1 DNA binding activity. Once the complex recognizes and binds DNA at specific sites, the E2 dimer is removed from DNA. E2 also regulates viral transcription through binding to the E2RE response element (5'-ACCNNNNNNGGT-3') present in multiple copies in the regulatory regions of the viral genome. Activates or represses transcription depending on E2RE's position with regards to proximal promoter elements including the TATA-box. Repression occurs by sterically hindering the assembly of the transcription initiation complex.</text>
</comment>
<comment type="subunit">
    <text evidence="1">Binds DNA as homodimer. Interacts with protein E1; this interaction greatly increases E1 DNA-binding activity. Interacts with protein L1; this interaction enhances E2-dependent replication and transcription activation. Interacts with protein L2; this interaction inhibits E2 transcriptional activity but not DNA replication function E2. Interacts with protein E7; this interaction inhibits E7 oncogenic activity. Interacts with host TAF1; this interaction modulates E2-dependent transcriptional regulation. Interacts with host BRD4; this interaction mediates E2 transcriptional activation function. Additionally, the interaction with host BRD4 on mitotic chromosomes mediates tethering of the viral genome. Interacts with host TOPBP1; this interaction is required for optimal viral DNA replication.</text>
</comment>
<comment type="subcellular location">
    <subcellularLocation>
        <location evidence="1">Host nucleus</location>
    </subcellularLocation>
</comment>
<comment type="PTM">
    <text evidence="1">Phosphorylated.</text>
</comment>
<comment type="PTM">
    <text evidence="1">Sumoylation plays a regulatory role in E2 transcriptional activity.</text>
</comment>
<comment type="similarity">
    <text evidence="1">Belongs to the papillomaviridae E2 protein family.</text>
</comment>
<evidence type="ECO:0000255" key="1">
    <source>
        <dbReference type="HAMAP-Rule" id="MF_04001"/>
    </source>
</evidence>
<evidence type="ECO:0000256" key="2">
    <source>
        <dbReference type="SAM" id="MobiDB-lite"/>
    </source>
</evidence>
<protein>
    <recommendedName>
        <fullName evidence="1">Regulatory protein E2</fullName>
    </recommendedName>
</protein>
<dbReference type="EMBL" id="X70827">
    <property type="protein sequence ID" value="CAA50160.1"/>
    <property type="molecule type" value="Genomic_DNA"/>
</dbReference>
<dbReference type="RefSeq" id="NP_040892.1">
    <property type="nucleotide sequence ID" value="NC_001457.1"/>
</dbReference>
<dbReference type="SMR" id="Q07849"/>
<dbReference type="KEGG" id="vg:1489449"/>
<dbReference type="OrthoDB" id="15886at10239"/>
<dbReference type="Proteomes" id="UP000009253">
    <property type="component" value="Genome"/>
</dbReference>
<dbReference type="GO" id="GO:0042025">
    <property type="term" value="C:host cell nucleus"/>
    <property type="evidence" value="ECO:0007669"/>
    <property type="project" value="UniProtKB-SubCell"/>
</dbReference>
<dbReference type="GO" id="GO:0003677">
    <property type="term" value="F:DNA binding"/>
    <property type="evidence" value="ECO:0007669"/>
    <property type="project" value="UniProtKB-UniRule"/>
</dbReference>
<dbReference type="GO" id="GO:0003700">
    <property type="term" value="F:DNA-binding transcription factor activity"/>
    <property type="evidence" value="ECO:0007669"/>
    <property type="project" value="UniProtKB-UniRule"/>
</dbReference>
<dbReference type="GO" id="GO:0000166">
    <property type="term" value="F:nucleotide binding"/>
    <property type="evidence" value="ECO:0007669"/>
    <property type="project" value="UniProtKB-UniRule"/>
</dbReference>
<dbReference type="GO" id="GO:0006260">
    <property type="term" value="P:DNA replication"/>
    <property type="evidence" value="ECO:0007669"/>
    <property type="project" value="UniProtKB-KW"/>
</dbReference>
<dbReference type="GO" id="GO:0006351">
    <property type="term" value="P:DNA-templated transcription"/>
    <property type="evidence" value="ECO:0007669"/>
    <property type="project" value="UniProtKB-UniRule"/>
</dbReference>
<dbReference type="GO" id="GO:0006275">
    <property type="term" value="P:regulation of DNA replication"/>
    <property type="evidence" value="ECO:0007669"/>
    <property type="project" value="UniProtKB-UniRule"/>
</dbReference>
<dbReference type="GO" id="GO:0039693">
    <property type="term" value="P:viral DNA genome replication"/>
    <property type="evidence" value="ECO:0007669"/>
    <property type="project" value="UniProtKB-UniRule"/>
</dbReference>
<dbReference type="Gene3D" id="3.30.70.330">
    <property type="match status" value="1"/>
</dbReference>
<dbReference type="Gene3D" id="1.10.287.30">
    <property type="entry name" value="E2 (early) protein, N terminal domain, subdomain 1"/>
    <property type="match status" value="1"/>
</dbReference>
<dbReference type="Gene3D" id="2.170.200.10">
    <property type="entry name" value="Papillomavirus E2 early protein domain"/>
    <property type="match status" value="1"/>
</dbReference>
<dbReference type="HAMAP" id="MF_04001">
    <property type="entry name" value="PPV_E2"/>
    <property type="match status" value="1"/>
</dbReference>
<dbReference type="InterPro" id="IPR035975">
    <property type="entry name" value="E2/EBNA1_C_sf"/>
</dbReference>
<dbReference type="InterPro" id="IPR012677">
    <property type="entry name" value="Nucleotide-bd_a/b_plait_sf"/>
</dbReference>
<dbReference type="InterPro" id="IPR000427">
    <property type="entry name" value="Papillomavirus_E2_C"/>
</dbReference>
<dbReference type="InterPro" id="IPR001866">
    <property type="entry name" value="PPV_E2_N"/>
</dbReference>
<dbReference type="InterPro" id="IPR033668">
    <property type="entry name" value="Reg_prot_E2"/>
</dbReference>
<dbReference type="InterPro" id="IPR036050">
    <property type="entry name" value="Regulatory_protein_E2_N"/>
</dbReference>
<dbReference type="InterPro" id="IPR042503">
    <property type="entry name" value="Regulatory_protein_E2_N_1"/>
</dbReference>
<dbReference type="InterPro" id="IPR042504">
    <property type="entry name" value="Regulatory_protein_E2_N_2"/>
</dbReference>
<dbReference type="Pfam" id="PF00511">
    <property type="entry name" value="PPV_E2_C"/>
    <property type="match status" value="1"/>
</dbReference>
<dbReference type="Pfam" id="PF00508">
    <property type="entry name" value="PPV_E2_N"/>
    <property type="match status" value="1"/>
</dbReference>
<dbReference type="SUPFAM" id="SSF51332">
    <property type="entry name" value="E2 regulatory, transactivation domain"/>
    <property type="match status" value="1"/>
</dbReference>
<dbReference type="SUPFAM" id="SSF54957">
    <property type="entry name" value="Viral DNA-binding domain"/>
    <property type="match status" value="1"/>
</dbReference>
<organismHost>
    <name type="scientific">Homo sapiens</name>
    <name type="common">Human</name>
    <dbReference type="NCBI Taxonomy" id="9606"/>
</organismHost>
<accession>Q07849</accession>
<gene>
    <name evidence="1" type="primary">E2</name>
</gene>
<organism>
    <name type="scientific">Human papillomavirus 4</name>
    <dbReference type="NCBI Taxonomy" id="10617"/>
    <lineage>
        <taxon>Viruses</taxon>
        <taxon>Monodnaviria</taxon>
        <taxon>Shotokuvirae</taxon>
        <taxon>Cossaviricota</taxon>
        <taxon>Papovaviricetes</taxon>
        <taxon>Zurhausenvirales</taxon>
        <taxon>Papillomaviridae</taxon>
        <taxon>Firstpapillomavirinae</taxon>
        <taxon>Gammapapillomavirus</taxon>
        <taxon>Gammapapillomavirus 1</taxon>
    </lineage>
</organism>
<reference key="1">
    <citation type="journal article" date="1993" name="Virology">
        <title>Two novel types of human papillomavirus, HPV 63 and HPV 65: comparisons of their clinical and histological features and DNA sequences to other HPV types.</title>
        <authorList>
            <person name="Egawa K."/>
            <person name="Delius H."/>
            <person name="Matsukura T."/>
            <person name="Kawashima M."/>
            <person name="de Villiers E.M."/>
        </authorList>
    </citation>
    <scope>NUCLEOTIDE SEQUENCE [GENOMIC DNA]</scope>
</reference>
<feature type="chain" id="PRO_0000133181" description="Regulatory protein E2">
    <location>
        <begin position="1"/>
        <end position="402"/>
    </location>
</feature>
<feature type="region of interest" description="Transactivation domain" evidence="1">
    <location>
        <begin position="1"/>
        <end position="202"/>
    </location>
</feature>
<feature type="region of interest" description="Disordered" evidence="2">
    <location>
        <begin position="207"/>
        <end position="304"/>
    </location>
</feature>
<feature type="region of interest" description="DNA-binding domain" evidence="1">
    <location>
        <begin position="321"/>
        <end position="402"/>
    </location>
</feature>
<feature type="compositionally biased region" description="Polar residues" evidence="2">
    <location>
        <begin position="216"/>
        <end position="231"/>
    </location>
</feature>
<feature type="cross-link" description="Glycyl lysine isopeptide (Lys-Gly) (interchain with G-Cter in SUMO)" evidence="1">
    <location>
        <position position="328"/>
    </location>
</feature>